<name>SDRF_STAEP</name>
<sequence length="1733" mass="184723">MKKRRQGPINKRVDFLSNKVNKYSIRKFTVGTASILVGATLMFGAADNEAKAAEDNQLESASKEEQKGSRDNENSKLNQVDLDNGSHSSEKTTNVNNATEVKKVEAPTTSDVSKPKANEAVVTNESTKPKTTEAPTVNEESIAETPKTSTTQQDSTEKNNPSLKDNLNSSSTTSKESKTDEHSTKQAQMSTNKSNLDTNDSPTQSEKTSSQANNDSTDNQSAPSKQLDSKPSEQKVYKTKFNDEPTQDVEHTTTKLKTPSVSTDSSVNDKQDYTRSAVASLGVDSNETEAITNAVRDNLDLKAASREQINEAIIAEALKKDFSNPDYGVDTPLALNRSQSKNSPHKSASPRMNLMSLAAEPNSGKNVNDKVKITNPTLSLNKSNNHANNVIWPTSNEQFNLKANYELDDSIKEGDTFTIKYGQYIRPGGLELPAIKTQLRSKDGSIVANGVYDKTTNTTTYTFTNYVDQYQNITGSFDLIATPKRETAIKDNQNYPMEVTIANEVVKKDFIVDYGNKKDNTTTAAVANVDNVNNKHNEVVYLNQNNQNPKYAKYFSTVKNGEFIPGEVKVYEVTDTNAMVDSFNPDLNSSNVKDVTSQFAPKVSADGTRVDINFARSMANGKKYIVTQAVRPTGTGNVYTEYWLTRDGTTNTNDFYRGTKSTTVTYLNGSSTAQGDNPTYSLGDYVWLDKNKNGVQDDDEKGLAGVYVTLKDSNNRELQRVTTDQSGHYQFDNLQNGTYTVEFAIPDNYTPSPANNSTNDAIDSDGERDGTRKVVVAKGTINNADNMTVDTGFYLTPKYNVGDYVWEDTNKDGIQDDNEKGISGVKVTLKNKNGDTIGTTTTDSNGKYEFTGLENGDYTIEFETPEGYTPTKQNSGSDEGKDSNGTKTTVTVKDADNKTIDSGFYKPTYNLGDYVWEDTNKDGIQDDSEKGISGVKVTLKDKNGNAIGTTTTDASGHYQFKGLENGSYTVEFETPSGYTPTKANSGQDITVDSNGITTTGIINGADNLTIDSGFYKTPKYSVGDYVWEDTNKDGIQDDNEKGISGVKVTLKDEKGNIISTTTTDENGKYQFDNLDSGNYIIHFEKPEGMTQTTANSGNDDEKDADGEDVRVTITDHDDFSIDNGYFDDDSDSDSDADSDSDSDSDSDADSDSDADSDSDADSDSDSDSDSDADSDSDSDSDSDSDSDSDADSDSDSDSDSDADSDSDSDSDSDSDSDSDSDSDSDSDSDSDSDSDSDSDSDSDSDADSDSDADSDSDSDSDSDADSDSDSDSDSDADSDSDSDSDSDSDSDSDADSDSDSDSDSDSDSDSDSDSDSDSDSDSDADSDSDSDSDSDSDSDSDSDSDSDSDSDSDADSDADSDSDADSDSDADSDSDSDSDSDADSDSDSDSDSDSDSDSDSDSDSDSDSDSDSDSDSDADSDSDSDSDSDSDSDSDADSDSDSDSDSDADSDSDSDSDSDADSDSDSDSDSDADSDSDSDSDSDSDSDSDADSDSDSDSDSDSDSDSDSDSDSDSDSDSDSDSDSDSDSDSDSDSDSDSDSDSDSDSDSDSDSDSDSDSDSDSDSDSDSDSDSDSDSDSDSDSDSDSDSDSDSDSDSDSDSDSDSDSDSDSDSDSDSDSDSDADSDSDSDSDSDADSDSDSDSDSDSDSDSDSDSDSDSDSDSDSDSDSDSDSDSDSDSDSDSDSDSDKNAKDKLPDTGANEDHDSKGTLLGTLFAGLGALLLGRRRKKDNKEK</sequence>
<gene>
    <name type="primary">sdrF</name>
</gene>
<keyword id="KW-0134">Cell wall</keyword>
<keyword id="KW-0572">Peptidoglycan-anchor</keyword>
<keyword id="KW-0677">Repeat</keyword>
<keyword id="KW-0964">Secreted</keyword>
<keyword id="KW-0732">Signal</keyword>
<keyword id="KW-0843">Virulence</keyword>
<proteinExistence type="evidence at protein level"/>
<organism>
    <name type="scientific">Staphylococcus epidermidis</name>
    <dbReference type="NCBI Taxonomy" id="1282"/>
    <lineage>
        <taxon>Bacteria</taxon>
        <taxon>Bacillati</taxon>
        <taxon>Bacillota</taxon>
        <taxon>Bacilli</taxon>
        <taxon>Bacillales</taxon>
        <taxon>Staphylococcaceae</taxon>
        <taxon>Staphylococcus</taxon>
    </lineage>
</organism>
<evidence type="ECO:0000255" key="1"/>
<evidence type="ECO:0000255" key="2">
    <source>
        <dbReference type="PROSITE-ProRule" id="PRU00477"/>
    </source>
</evidence>
<evidence type="ECO:0000256" key="3">
    <source>
        <dbReference type="SAM" id="MobiDB-lite"/>
    </source>
</evidence>
<evidence type="ECO:0000269" key="4">
    <source>
    </source>
</evidence>
<evidence type="ECO:0000305" key="5"/>
<accession>Q9KI14</accession>
<comment type="function">
    <text evidence="4">Binds to type I collagen via alpha-2(I) or alpha-1(I) chains, although its affinity for the alpha-1(I) chain is significantly higher. Involved in bacterial adherence to transcutaneous drivelines from explanted ventricular assist devices.</text>
</comment>
<comment type="subcellular location">
    <subcellularLocation>
        <location evidence="2">Secreted</location>
        <location evidence="2">Cell wall</location>
        <topology evidence="2">Peptidoglycan-anchor</topology>
    </subcellularLocation>
</comment>
<comment type="domain">
    <text>Each CNA-B domain is able to independently mediate adherence to the substrate.</text>
</comment>
<comment type="similarity">
    <text evidence="5">Belongs to the serine-aspartate repeat-containing protein (SDr) family.</text>
</comment>
<feature type="signal peptide" evidence="1">
    <location>
        <begin position="1"/>
        <end position="45"/>
    </location>
</feature>
<feature type="chain" id="PRO_0000304879" description="Serine-aspartate repeat-containing protein F">
    <location>
        <begin position="46"/>
        <end position="1697"/>
    </location>
</feature>
<feature type="propeptide" id="PRO_0000304880" description="Removed by sortase" evidence="2">
    <location>
        <begin position="1698"/>
        <end position="1733"/>
    </location>
</feature>
<feature type="domain" description="CNA-B 1">
    <location>
        <begin position="679"/>
        <end position="797"/>
    </location>
</feature>
<feature type="domain" description="CNA-B 2">
    <location>
        <begin position="798"/>
        <end position="907"/>
    </location>
</feature>
<feature type="domain" description="CNA-B 3">
    <location>
        <begin position="908"/>
        <end position="1018"/>
    </location>
</feature>
<feature type="domain" description="CNA-B 4">
    <location>
        <begin position="1019"/>
        <end position="1129"/>
    </location>
</feature>
<feature type="region of interest" description="Ligand binding A region">
    <location>
        <begin position="46"/>
        <end position="678"/>
    </location>
</feature>
<feature type="region of interest" description="Disordered" evidence="3">
    <location>
        <begin position="51"/>
        <end position="269"/>
    </location>
</feature>
<feature type="region of interest" description="Disordered" evidence="3">
    <location>
        <begin position="332"/>
        <end position="351"/>
    </location>
</feature>
<feature type="region of interest" description="Type I collagen binding region">
    <location>
        <begin position="679"/>
        <end position="1129"/>
    </location>
</feature>
<feature type="region of interest" description="Disordered" evidence="3">
    <location>
        <begin position="862"/>
        <end position="890"/>
    </location>
</feature>
<feature type="region of interest" description="Disordered" evidence="3">
    <location>
        <begin position="1085"/>
        <end position="1708"/>
    </location>
</feature>
<feature type="short sequence motif" description="LPXTG sorting signal" evidence="2">
    <location>
        <begin position="1694"/>
        <end position="1698"/>
    </location>
</feature>
<feature type="compositionally biased region" description="Basic and acidic residues" evidence="3">
    <location>
        <begin position="61"/>
        <end position="74"/>
    </location>
</feature>
<feature type="compositionally biased region" description="Polar residues" evidence="3">
    <location>
        <begin position="85"/>
        <end position="99"/>
    </location>
</feature>
<feature type="compositionally biased region" description="Polar residues" evidence="3">
    <location>
        <begin position="146"/>
        <end position="168"/>
    </location>
</feature>
<feature type="compositionally biased region" description="Basic and acidic residues" evidence="3">
    <location>
        <begin position="175"/>
        <end position="184"/>
    </location>
</feature>
<feature type="compositionally biased region" description="Polar residues" evidence="3">
    <location>
        <begin position="186"/>
        <end position="226"/>
    </location>
</feature>
<feature type="compositionally biased region" description="Basic and acidic residues" evidence="3">
    <location>
        <begin position="227"/>
        <end position="253"/>
    </location>
</feature>
<feature type="compositionally biased region" description="Polar residues" evidence="3">
    <location>
        <begin position="255"/>
        <end position="266"/>
    </location>
</feature>
<feature type="compositionally biased region" description="Polar residues" evidence="3">
    <location>
        <begin position="336"/>
        <end position="346"/>
    </location>
</feature>
<feature type="compositionally biased region" description="Basic and acidic residues" evidence="3">
    <location>
        <begin position="1107"/>
        <end position="1119"/>
    </location>
</feature>
<feature type="compositionally biased region" description="Acidic residues" evidence="3">
    <location>
        <begin position="1125"/>
        <end position="1684"/>
    </location>
</feature>
<feature type="compositionally biased region" description="Basic and acidic residues" evidence="3">
    <location>
        <begin position="1685"/>
        <end position="1706"/>
    </location>
</feature>
<feature type="modified residue" description="Pentaglycyl murein peptidoglycan amidated threonine" evidence="2">
    <location>
        <position position="1697"/>
    </location>
</feature>
<dbReference type="EMBL" id="AF245041">
    <property type="protein sequence ID" value="AAF72509.1"/>
    <property type="molecule type" value="Genomic_DNA"/>
</dbReference>
<dbReference type="SMR" id="Q9KI14"/>
<dbReference type="GO" id="GO:0005576">
    <property type="term" value="C:extracellular region"/>
    <property type="evidence" value="ECO:0007669"/>
    <property type="project" value="UniProtKB-KW"/>
</dbReference>
<dbReference type="GO" id="GO:0007155">
    <property type="term" value="P:cell adhesion"/>
    <property type="evidence" value="ECO:0007669"/>
    <property type="project" value="InterPro"/>
</dbReference>
<dbReference type="Gene3D" id="2.60.40.1280">
    <property type="match status" value="1"/>
</dbReference>
<dbReference type="Gene3D" id="2.60.40.10">
    <property type="entry name" value="Immunoglobulins"/>
    <property type="match status" value="4"/>
</dbReference>
<dbReference type="InterPro" id="IPR008966">
    <property type="entry name" value="Adhesion_dom_sf"/>
</dbReference>
<dbReference type="InterPro" id="IPR011252">
    <property type="entry name" value="Fibrogen-bd_dom1"/>
</dbReference>
<dbReference type="InterPro" id="IPR013783">
    <property type="entry name" value="Ig-like_fold"/>
</dbReference>
<dbReference type="InterPro" id="IPR019931">
    <property type="entry name" value="LPXTG_anchor"/>
</dbReference>
<dbReference type="InterPro" id="IPR050972">
    <property type="entry name" value="SDr-like"/>
</dbReference>
<dbReference type="InterPro" id="IPR033764">
    <property type="entry name" value="Sdr_B"/>
</dbReference>
<dbReference type="InterPro" id="IPR041171">
    <property type="entry name" value="SDR_Ig"/>
</dbReference>
<dbReference type="InterPro" id="IPR005877">
    <property type="entry name" value="YSIRK_signal_dom"/>
</dbReference>
<dbReference type="NCBIfam" id="TIGR01167">
    <property type="entry name" value="LPXTG_anchor"/>
    <property type="match status" value="1"/>
</dbReference>
<dbReference type="NCBIfam" id="TIGR01168">
    <property type="entry name" value="YSIRK_signal"/>
    <property type="match status" value="1"/>
</dbReference>
<dbReference type="PANTHER" id="PTHR34403">
    <property type="entry name" value="TOL-PAL SYSTEM PROTEIN TOLA"/>
    <property type="match status" value="1"/>
</dbReference>
<dbReference type="PANTHER" id="PTHR34403:SF8">
    <property type="entry name" value="TOL-PAL SYSTEM PROTEIN TOLA"/>
    <property type="match status" value="1"/>
</dbReference>
<dbReference type="Pfam" id="PF17961">
    <property type="entry name" value="Big_8"/>
    <property type="match status" value="1"/>
</dbReference>
<dbReference type="Pfam" id="PF00746">
    <property type="entry name" value="Gram_pos_anchor"/>
    <property type="match status" value="1"/>
</dbReference>
<dbReference type="Pfam" id="PF17210">
    <property type="entry name" value="SdrD_B"/>
    <property type="match status" value="4"/>
</dbReference>
<dbReference type="Pfam" id="PF04650">
    <property type="entry name" value="YSIRK_signal"/>
    <property type="match status" value="1"/>
</dbReference>
<dbReference type="SUPFAM" id="SSF49401">
    <property type="entry name" value="Bacterial adhesins"/>
    <property type="match status" value="2"/>
</dbReference>
<dbReference type="SUPFAM" id="SSF117074">
    <property type="entry name" value="Hypothetical protein PA1324"/>
    <property type="match status" value="4"/>
</dbReference>
<dbReference type="PROSITE" id="PS50847">
    <property type="entry name" value="GRAM_POS_ANCHORING"/>
    <property type="match status" value="1"/>
</dbReference>
<reference key="1">
    <citation type="journal article" date="2000" name="Microbiology">
        <title>The serine-aspartate repeat (Sdr) protein family in Staphylococcus epidermidis.</title>
        <authorList>
            <person name="McCrea K.W."/>
            <person name="Hartford O."/>
            <person name="Davis S."/>
            <person name="Eidhin D.N."/>
            <person name="Lina G."/>
            <person name="Speziale P."/>
            <person name="Foster T.J."/>
            <person name="Hoeoek M."/>
        </authorList>
    </citation>
    <scope>NUCLEOTIDE SEQUENCE [GENOMIC DNA]</scope>
    <source>
        <strain>ATCC 9491</strain>
    </source>
</reference>
<reference key="2">
    <citation type="journal article" date="2007" name="J. Biol. Chem.">
        <title>SdrF, a Staphylococcus epidermidis surface protein, binds type I collagen.</title>
        <authorList>
            <person name="Arrecubieta C."/>
            <person name="Lee M.-H."/>
            <person name="Macey A."/>
            <person name="Foster T.J."/>
            <person name="Lowy F.D."/>
        </authorList>
    </citation>
    <scope>FUNCTION IN COLLAGEN BINDING</scope>
    <source>
        <strain>ATCC 9491</strain>
    </source>
</reference>
<protein>
    <recommendedName>
        <fullName>Serine-aspartate repeat-containing protein F</fullName>
    </recommendedName>
</protein>